<protein>
    <recommendedName>
        <fullName>Uncharacterized protein AF_0541</fullName>
    </recommendedName>
</protein>
<dbReference type="EMBL" id="AE000782">
    <property type="protein sequence ID" value="AAB90705.1"/>
    <property type="molecule type" value="Genomic_DNA"/>
</dbReference>
<dbReference type="PIR" id="E69317">
    <property type="entry name" value="E69317"/>
</dbReference>
<dbReference type="RefSeq" id="WP_010878048.1">
    <property type="nucleotide sequence ID" value="NC_000917.1"/>
</dbReference>
<dbReference type="STRING" id="224325.AF_0541"/>
<dbReference type="PaxDb" id="224325-AF_0541"/>
<dbReference type="EnsemblBacteria" id="AAB90705">
    <property type="protein sequence ID" value="AAB90705"/>
    <property type="gene ID" value="AF_0541"/>
</dbReference>
<dbReference type="KEGG" id="afu:AF_0541"/>
<dbReference type="HOGENOM" id="CLU_1860590_0_0_2"/>
<dbReference type="Proteomes" id="UP000002199">
    <property type="component" value="Chromosome"/>
</dbReference>
<dbReference type="GO" id="GO:0016020">
    <property type="term" value="C:membrane"/>
    <property type="evidence" value="ECO:0007669"/>
    <property type="project" value="UniProtKB-SubCell"/>
</dbReference>
<proteinExistence type="predicted"/>
<reference key="1">
    <citation type="journal article" date="1997" name="Nature">
        <title>The complete genome sequence of the hyperthermophilic, sulphate-reducing archaeon Archaeoglobus fulgidus.</title>
        <authorList>
            <person name="Klenk H.-P."/>
            <person name="Clayton R.A."/>
            <person name="Tomb J.-F."/>
            <person name="White O."/>
            <person name="Nelson K.E."/>
            <person name="Ketchum K.A."/>
            <person name="Dodson R.J."/>
            <person name="Gwinn M.L."/>
            <person name="Hickey E.K."/>
            <person name="Peterson J.D."/>
            <person name="Richardson D.L."/>
            <person name="Kerlavage A.R."/>
            <person name="Graham D.E."/>
            <person name="Kyrpides N.C."/>
            <person name="Fleischmann R.D."/>
            <person name="Quackenbush J."/>
            <person name="Lee N.H."/>
            <person name="Sutton G.G."/>
            <person name="Gill S.R."/>
            <person name="Kirkness E.F."/>
            <person name="Dougherty B.A."/>
            <person name="McKenney K."/>
            <person name="Adams M.D."/>
            <person name="Loftus B.J."/>
            <person name="Peterson S.N."/>
            <person name="Reich C.I."/>
            <person name="McNeil L.K."/>
            <person name="Badger J.H."/>
            <person name="Glodek A."/>
            <person name="Zhou L."/>
            <person name="Overbeek R."/>
            <person name="Gocayne J.D."/>
            <person name="Weidman J.F."/>
            <person name="McDonald L.A."/>
            <person name="Utterback T.R."/>
            <person name="Cotton M.D."/>
            <person name="Spriggs T."/>
            <person name="Artiach P."/>
            <person name="Kaine B.P."/>
            <person name="Sykes S.M."/>
            <person name="Sadow P.W."/>
            <person name="D'Andrea K.P."/>
            <person name="Bowman C."/>
            <person name="Fujii C."/>
            <person name="Garland S.A."/>
            <person name="Mason T.M."/>
            <person name="Olsen G.J."/>
            <person name="Fraser C.M."/>
            <person name="Smith H.O."/>
            <person name="Woese C.R."/>
            <person name="Venter J.C."/>
        </authorList>
    </citation>
    <scope>NUCLEOTIDE SEQUENCE [LARGE SCALE GENOMIC DNA]</scope>
    <source>
        <strain>ATCC 49558 / DSM 4304 / JCM 9628 / NBRC 100126 / VC-16</strain>
    </source>
</reference>
<organism>
    <name type="scientific">Archaeoglobus fulgidus (strain ATCC 49558 / DSM 4304 / JCM 9628 / NBRC 100126 / VC-16)</name>
    <dbReference type="NCBI Taxonomy" id="224325"/>
    <lineage>
        <taxon>Archaea</taxon>
        <taxon>Methanobacteriati</taxon>
        <taxon>Methanobacteriota</taxon>
        <taxon>Archaeoglobi</taxon>
        <taxon>Archaeoglobales</taxon>
        <taxon>Archaeoglobaceae</taxon>
        <taxon>Archaeoglobus</taxon>
    </lineage>
</organism>
<gene>
    <name type="ordered locus">AF_0541</name>
</gene>
<name>Y541_ARCFU</name>
<keyword id="KW-0472">Membrane</keyword>
<keyword id="KW-1185">Reference proteome</keyword>
<keyword id="KW-0812">Transmembrane</keyword>
<keyword id="KW-1133">Transmembrane helix</keyword>
<comment type="subcellular location">
    <subcellularLocation>
        <location evidence="2">Membrane</location>
        <topology evidence="2">Single-pass membrane protein</topology>
    </subcellularLocation>
</comment>
<sequence>MVGISWQIVLAVIGVVAGFIITDKILNMKGYRGREILRPMELEELCSHLMTKYLVSVAAIAGDKKIVEGVDDYEIDEIRTLMRSMGSEEILLVSGSDYRYAMRGNGIFIYIKGKFVSLEDFAKVWKLVKSSIAGVGV</sequence>
<evidence type="ECO:0000255" key="1"/>
<evidence type="ECO:0000305" key="2"/>
<accession>O29709</accession>
<feature type="chain" id="PRO_0000127887" description="Uncharacterized protein AF_0541">
    <location>
        <begin position="1"/>
        <end position="137"/>
    </location>
</feature>
<feature type="transmembrane region" description="Helical" evidence="1">
    <location>
        <begin position="4"/>
        <end position="21"/>
    </location>
</feature>